<feature type="chain" id="PRO_0000364763" description="Fructose-1,6-bisphosphatase class 1">
    <location>
        <begin position="1"/>
        <end position="337"/>
    </location>
</feature>
<feature type="binding site" evidence="1">
    <location>
        <position position="89"/>
    </location>
    <ligand>
        <name>Mg(2+)</name>
        <dbReference type="ChEBI" id="CHEBI:18420"/>
        <label>1</label>
    </ligand>
</feature>
<feature type="binding site" evidence="1">
    <location>
        <position position="112"/>
    </location>
    <ligand>
        <name>Mg(2+)</name>
        <dbReference type="ChEBI" id="CHEBI:18420"/>
        <label>1</label>
    </ligand>
</feature>
<feature type="binding site" evidence="1">
    <location>
        <position position="112"/>
    </location>
    <ligand>
        <name>Mg(2+)</name>
        <dbReference type="ChEBI" id="CHEBI:18420"/>
        <label>2</label>
    </ligand>
</feature>
<feature type="binding site" evidence="1">
    <location>
        <position position="114"/>
    </location>
    <ligand>
        <name>Mg(2+)</name>
        <dbReference type="ChEBI" id="CHEBI:18420"/>
        <label>1</label>
    </ligand>
</feature>
<feature type="binding site" evidence="1">
    <location>
        <begin position="115"/>
        <end position="118"/>
    </location>
    <ligand>
        <name>substrate</name>
    </ligand>
</feature>
<feature type="binding site" evidence="1">
    <location>
        <position position="115"/>
    </location>
    <ligand>
        <name>Mg(2+)</name>
        <dbReference type="ChEBI" id="CHEBI:18420"/>
        <label>2</label>
    </ligand>
</feature>
<feature type="binding site" evidence="1">
    <location>
        <position position="208"/>
    </location>
    <ligand>
        <name>substrate</name>
    </ligand>
</feature>
<feature type="binding site" evidence="1">
    <location>
        <position position="241"/>
    </location>
    <ligand>
        <name>substrate</name>
    </ligand>
</feature>
<feature type="binding site" evidence="1">
    <location>
        <position position="271"/>
    </location>
    <ligand>
        <name>substrate</name>
    </ligand>
</feature>
<feature type="binding site" evidence="1">
    <location>
        <position position="277"/>
    </location>
    <ligand>
        <name>Mg(2+)</name>
        <dbReference type="ChEBI" id="CHEBI:18420"/>
        <label>2</label>
    </ligand>
</feature>
<name>F16PA_YERPN</name>
<gene>
    <name evidence="1" type="primary">fbp</name>
    <name type="ordered locus">YPN_3264</name>
    <name type="ORF">YP516_3708</name>
</gene>
<evidence type="ECO:0000255" key="1">
    <source>
        <dbReference type="HAMAP-Rule" id="MF_01855"/>
    </source>
</evidence>
<dbReference type="EC" id="3.1.3.11" evidence="1"/>
<dbReference type="EMBL" id="CP000305">
    <property type="protein sequence ID" value="ABG19591.1"/>
    <property type="molecule type" value="Genomic_DNA"/>
</dbReference>
<dbReference type="EMBL" id="ACNQ01000017">
    <property type="protein sequence ID" value="EEO75773.1"/>
    <property type="molecule type" value="Genomic_DNA"/>
</dbReference>
<dbReference type="PIR" id="AI0427">
    <property type="entry name" value="AI0427"/>
</dbReference>
<dbReference type="RefSeq" id="WP_002216946.1">
    <property type="nucleotide sequence ID" value="NZ_ACNQ01000017.1"/>
</dbReference>
<dbReference type="SMR" id="Q1CEI9"/>
<dbReference type="GeneID" id="57975194"/>
<dbReference type="KEGG" id="ypn:YPN_3264"/>
<dbReference type="HOGENOM" id="CLU_039977_2_2_6"/>
<dbReference type="UniPathway" id="UPA00138"/>
<dbReference type="Proteomes" id="UP000008936">
    <property type="component" value="Chromosome"/>
</dbReference>
<dbReference type="GO" id="GO:0005829">
    <property type="term" value="C:cytosol"/>
    <property type="evidence" value="ECO:0007669"/>
    <property type="project" value="TreeGrafter"/>
</dbReference>
<dbReference type="GO" id="GO:0042132">
    <property type="term" value="F:fructose 1,6-bisphosphate 1-phosphatase activity"/>
    <property type="evidence" value="ECO:0007669"/>
    <property type="project" value="UniProtKB-UniRule"/>
</dbReference>
<dbReference type="GO" id="GO:0000287">
    <property type="term" value="F:magnesium ion binding"/>
    <property type="evidence" value="ECO:0007669"/>
    <property type="project" value="UniProtKB-UniRule"/>
</dbReference>
<dbReference type="GO" id="GO:0030388">
    <property type="term" value="P:fructose 1,6-bisphosphate metabolic process"/>
    <property type="evidence" value="ECO:0007669"/>
    <property type="project" value="TreeGrafter"/>
</dbReference>
<dbReference type="GO" id="GO:0006002">
    <property type="term" value="P:fructose 6-phosphate metabolic process"/>
    <property type="evidence" value="ECO:0007669"/>
    <property type="project" value="TreeGrafter"/>
</dbReference>
<dbReference type="GO" id="GO:0006000">
    <property type="term" value="P:fructose metabolic process"/>
    <property type="evidence" value="ECO:0007669"/>
    <property type="project" value="TreeGrafter"/>
</dbReference>
<dbReference type="GO" id="GO:0006094">
    <property type="term" value="P:gluconeogenesis"/>
    <property type="evidence" value="ECO:0007669"/>
    <property type="project" value="UniProtKB-UniRule"/>
</dbReference>
<dbReference type="GO" id="GO:0005986">
    <property type="term" value="P:sucrose biosynthetic process"/>
    <property type="evidence" value="ECO:0007669"/>
    <property type="project" value="TreeGrafter"/>
</dbReference>
<dbReference type="CDD" id="cd00354">
    <property type="entry name" value="FBPase"/>
    <property type="match status" value="1"/>
</dbReference>
<dbReference type="FunFam" id="3.30.540.10:FF:000002">
    <property type="entry name" value="Fructose-1,6-bisphosphatase class 1"/>
    <property type="match status" value="1"/>
</dbReference>
<dbReference type="FunFam" id="3.40.190.80:FF:000001">
    <property type="entry name" value="Fructose-1,6-bisphosphatase class 1"/>
    <property type="match status" value="1"/>
</dbReference>
<dbReference type="Gene3D" id="3.40.190.80">
    <property type="match status" value="1"/>
</dbReference>
<dbReference type="Gene3D" id="3.30.540.10">
    <property type="entry name" value="Fructose-1,6-Bisphosphatase, subunit A, domain 1"/>
    <property type="match status" value="1"/>
</dbReference>
<dbReference type="HAMAP" id="MF_01855">
    <property type="entry name" value="FBPase_class1"/>
    <property type="match status" value="1"/>
</dbReference>
<dbReference type="InterPro" id="IPR044015">
    <property type="entry name" value="FBPase_C_dom"/>
</dbReference>
<dbReference type="InterPro" id="IPR000146">
    <property type="entry name" value="FBPase_class-1"/>
</dbReference>
<dbReference type="InterPro" id="IPR033391">
    <property type="entry name" value="FBPase_N"/>
</dbReference>
<dbReference type="InterPro" id="IPR028343">
    <property type="entry name" value="FBPtase"/>
</dbReference>
<dbReference type="InterPro" id="IPR020548">
    <property type="entry name" value="Fructose_bisphosphatase_AS"/>
</dbReference>
<dbReference type="NCBIfam" id="NF006778">
    <property type="entry name" value="PRK09293.1-1"/>
    <property type="match status" value="1"/>
</dbReference>
<dbReference type="PANTHER" id="PTHR11556">
    <property type="entry name" value="FRUCTOSE-1,6-BISPHOSPHATASE-RELATED"/>
    <property type="match status" value="1"/>
</dbReference>
<dbReference type="PANTHER" id="PTHR11556:SF35">
    <property type="entry name" value="SEDOHEPTULOSE-1,7-BISPHOSPHATASE, CHLOROPLASTIC"/>
    <property type="match status" value="1"/>
</dbReference>
<dbReference type="Pfam" id="PF00316">
    <property type="entry name" value="FBPase"/>
    <property type="match status" value="1"/>
</dbReference>
<dbReference type="Pfam" id="PF18913">
    <property type="entry name" value="FBPase_C"/>
    <property type="match status" value="1"/>
</dbReference>
<dbReference type="PIRSF" id="PIRSF500210">
    <property type="entry name" value="FBPtase"/>
    <property type="match status" value="1"/>
</dbReference>
<dbReference type="PIRSF" id="PIRSF000904">
    <property type="entry name" value="FBPtase_SBPase"/>
    <property type="match status" value="1"/>
</dbReference>
<dbReference type="PRINTS" id="PR00115">
    <property type="entry name" value="F16BPHPHTASE"/>
</dbReference>
<dbReference type="SUPFAM" id="SSF56655">
    <property type="entry name" value="Carbohydrate phosphatase"/>
    <property type="match status" value="1"/>
</dbReference>
<dbReference type="PROSITE" id="PS00124">
    <property type="entry name" value="FBPASE"/>
    <property type="match status" value="1"/>
</dbReference>
<comment type="catalytic activity">
    <reaction evidence="1">
        <text>beta-D-fructose 1,6-bisphosphate + H2O = beta-D-fructose 6-phosphate + phosphate</text>
        <dbReference type="Rhea" id="RHEA:11064"/>
        <dbReference type="ChEBI" id="CHEBI:15377"/>
        <dbReference type="ChEBI" id="CHEBI:32966"/>
        <dbReference type="ChEBI" id="CHEBI:43474"/>
        <dbReference type="ChEBI" id="CHEBI:57634"/>
        <dbReference type="EC" id="3.1.3.11"/>
    </reaction>
</comment>
<comment type="cofactor">
    <cofactor evidence="1">
        <name>Mg(2+)</name>
        <dbReference type="ChEBI" id="CHEBI:18420"/>
    </cofactor>
    <text evidence="1">Binds 2 magnesium ions per subunit.</text>
</comment>
<comment type="pathway">
    <text evidence="1">Carbohydrate biosynthesis; gluconeogenesis.</text>
</comment>
<comment type="subunit">
    <text evidence="1">Homotetramer.</text>
</comment>
<comment type="subcellular location">
    <subcellularLocation>
        <location evidence="1">Cytoplasm</location>
    </subcellularLocation>
</comment>
<comment type="similarity">
    <text evidence="1">Belongs to the FBPase class 1 family.</text>
</comment>
<reference key="1">
    <citation type="journal article" date="2006" name="J. Bacteriol.">
        <title>Complete genome sequence of Yersinia pestis strains Antiqua and Nepal516: evidence of gene reduction in an emerging pathogen.</title>
        <authorList>
            <person name="Chain P.S.G."/>
            <person name="Hu P."/>
            <person name="Malfatti S.A."/>
            <person name="Radnedge L."/>
            <person name="Larimer F."/>
            <person name="Vergez L.M."/>
            <person name="Worsham P."/>
            <person name="Chu M.C."/>
            <person name="Andersen G.L."/>
        </authorList>
    </citation>
    <scope>NUCLEOTIDE SEQUENCE [LARGE SCALE GENOMIC DNA]</scope>
    <source>
        <strain>Nepal516</strain>
    </source>
</reference>
<reference key="2">
    <citation type="submission" date="2009-04" db="EMBL/GenBank/DDBJ databases">
        <title>Yersinia pestis Nepal516A whole genome shotgun sequencing project.</title>
        <authorList>
            <person name="Plunkett G. III"/>
            <person name="Anderson B.D."/>
            <person name="Baumler D.J."/>
            <person name="Burland V."/>
            <person name="Cabot E.L."/>
            <person name="Glasner J.D."/>
            <person name="Mau B."/>
            <person name="Neeno-Eckwall E."/>
            <person name="Perna N.T."/>
            <person name="Munk A.C."/>
            <person name="Tapia R."/>
            <person name="Green L.D."/>
            <person name="Rogers Y.C."/>
            <person name="Detter J.C."/>
            <person name="Bruce D.C."/>
            <person name="Brettin T.S."/>
        </authorList>
    </citation>
    <scope>NUCLEOTIDE SEQUENCE [LARGE SCALE GENOMIC DNA]</scope>
    <source>
        <strain>Nepal516</strain>
    </source>
</reference>
<sequence length="337" mass="36996">MKTLGEFIVEKQLDFSHATGELTALLSAIKLGAKIIHRDINKAGLVDILGASGVSNIQGEDQMKLDLFANEKLKAALKARGEVAGIASEEEDDIVIFDGGRAENAKYVVLMDPLDGSSNIDVNVSVGTIFSIYRRITPFGTPITEEDFLQPGTKQVTAGYVVYGSSTMLVYTTGYGVHAFTYDPSLGVFCLSHEKVRYPATGCMYSINEGNYIKFPLGVKKYIKYCQEQDEATKRPYTSRYIGSLVADFHRNLLKGGIYIYPSTASHPQGKLRLLYECNPMAFLAEQAGGKATDGVNRILDIVPEKLHQRAPFFVGTKSMVEDAEGFIAKFPDEEAK</sequence>
<protein>
    <recommendedName>
        <fullName evidence="1">Fructose-1,6-bisphosphatase class 1</fullName>
        <shortName evidence="1">FBPase class 1</shortName>
        <ecNumber evidence="1">3.1.3.11</ecNumber>
    </recommendedName>
    <alternativeName>
        <fullName evidence="1">D-fructose-1,6-bisphosphate 1-phosphohydrolase class 1</fullName>
    </alternativeName>
</protein>
<accession>Q1CEI9</accession>
<accession>C4GXX3</accession>
<organism>
    <name type="scientific">Yersinia pestis bv. Antiqua (strain Nepal516)</name>
    <dbReference type="NCBI Taxonomy" id="377628"/>
    <lineage>
        <taxon>Bacteria</taxon>
        <taxon>Pseudomonadati</taxon>
        <taxon>Pseudomonadota</taxon>
        <taxon>Gammaproteobacteria</taxon>
        <taxon>Enterobacterales</taxon>
        <taxon>Yersiniaceae</taxon>
        <taxon>Yersinia</taxon>
    </lineage>
</organism>
<keyword id="KW-0119">Carbohydrate metabolism</keyword>
<keyword id="KW-0963">Cytoplasm</keyword>
<keyword id="KW-0378">Hydrolase</keyword>
<keyword id="KW-0460">Magnesium</keyword>
<keyword id="KW-0479">Metal-binding</keyword>
<proteinExistence type="inferred from homology"/>